<proteinExistence type="inferred from homology"/>
<accession>Q6CS90</accession>
<feature type="chain" id="PRO_0000083390" description="2-(3-amino-3-carboxypropyl)histidine synthase subunit 2">
    <location>
        <begin position="1"/>
        <end position="587"/>
    </location>
</feature>
<feature type="region of interest" description="Disordered" evidence="2">
    <location>
        <begin position="549"/>
        <end position="587"/>
    </location>
</feature>
<feature type="compositionally biased region" description="Acidic residues" evidence="2">
    <location>
        <begin position="555"/>
        <end position="566"/>
    </location>
</feature>
<feature type="binding site" evidence="1">
    <location>
        <position position="152"/>
    </location>
    <ligand>
        <name>[4Fe-4S] cluster</name>
        <dbReference type="ChEBI" id="CHEBI:49883"/>
    </ligand>
</feature>
<feature type="binding site" evidence="1">
    <location>
        <position position="173"/>
    </location>
    <ligand>
        <name>[4Fe-4S] cluster</name>
        <dbReference type="ChEBI" id="CHEBI:49883"/>
    </ligand>
</feature>
<feature type="binding site" evidence="1">
    <location>
        <position position="405"/>
    </location>
    <ligand>
        <name>[4Fe-4S] cluster</name>
        <dbReference type="ChEBI" id="CHEBI:49883"/>
    </ligand>
</feature>
<keyword id="KW-0963">Cytoplasm</keyword>
<keyword id="KW-0408">Iron</keyword>
<keyword id="KW-0411">Iron-sulfur</keyword>
<keyword id="KW-0479">Metal-binding</keyword>
<keyword id="KW-1185">Reference proteome</keyword>
<organism>
    <name type="scientific">Kluyveromyces lactis (strain ATCC 8585 / CBS 2359 / DSM 70799 / NBRC 1267 / NRRL Y-1140 / WM37)</name>
    <name type="common">Yeast</name>
    <name type="synonym">Candida sphaerica</name>
    <dbReference type="NCBI Taxonomy" id="284590"/>
    <lineage>
        <taxon>Eukaryota</taxon>
        <taxon>Fungi</taxon>
        <taxon>Dikarya</taxon>
        <taxon>Ascomycota</taxon>
        <taxon>Saccharomycotina</taxon>
        <taxon>Saccharomycetes</taxon>
        <taxon>Saccharomycetales</taxon>
        <taxon>Saccharomycetaceae</taxon>
        <taxon>Kluyveromyces</taxon>
    </lineage>
</organism>
<reference key="1">
    <citation type="journal article" date="2004" name="Nature">
        <title>Genome evolution in yeasts.</title>
        <authorList>
            <person name="Dujon B."/>
            <person name="Sherman D."/>
            <person name="Fischer G."/>
            <person name="Durrens P."/>
            <person name="Casaregola S."/>
            <person name="Lafontaine I."/>
            <person name="de Montigny J."/>
            <person name="Marck C."/>
            <person name="Neuveglise C."/>
            <person name="Talla E."/>
            <person name="Goffard N."/>
            <person name="Frangeul L."/>
            <person name="Aigle M."/>
            <person name="Anthouard V."/>
            <person name="Babour A."/>
            <person name="Barbe V."/>
            <person name="Barnay S."/>
            <person name="Blanchin S."/>
            <person name="Beckerich J.-M."/>
            <person name="Beyne E."/>
            <person name="Bleykasten C."/>
            <person name="Boisrame A."/>
            <person name="Boyer J."/>
            <person name="Cattolico L."/>
            <person name="Confanioleri F."/>
            <person name="de Daruvar A."/>
            <person name="Despons L."/>
            <person name="Fabre E."/>
            <person name="Fairhead C."/>
            <person name="Ferry-Dumazet H."/>
            <person name="Groppi A."/>
            <person name="Hantraye F."/>
            <person name="Hennequin C."/>
            <person name="Jauniaux N."/>
            <person name="Joyet P."/>
            <person name="Kachouri R."/>
            <person name="Kerrest A."/>
            <person name="Koszul R."/>
            <person name="Lemaire M."/>
            <person name="Lesur I."/>
            <person name="Ma L."/>
            <person name="Muller H."/>
            <person name="Nicaud J.-M."/>
            <person name="Nikolski M."/>
            <person name="Oztas S."/>
            <person name="Ozier-Kalogeropoulos O."/>
            <person name="Pellenz S."/>
            <person name="Potier S."/>
            <person name="Richard G.-F."/>
            <person name="Straub M.-L."/>
            <person name="Suleau A."/>
            <person name="Swennen D."/>
            <person name="Tekaia F."/>
            <person name="Wesolowski-Louvel M."/>
            <person name="Westhof E."/>
            <person name="Wirth B."/>
            <person name="Zeniou-Meyer M."/>
            <person name="Zivanovic Y."/>
            <person name="Bolotin-Fukuhara M."/>
            <person name="Thierry A."/>
            <person name="Bouchier C."/>
            <person name="Caudron B."/>
            <person name="Scarpelli C."/>
            <person name="Gaillardin C."/>
            <person name="Weissenbach J."/>
            <person name="Wincker P."/>
            <person name="Souciet J.-L."/>
        </authorList>
    </citation>
    <scope>NUCLEOTIDE SEQUENCE [LARGE SCALE GENOMIC DNA]</scope>
    <source>
        <strain>ATCC 8585 / CBS 2359 / DSM 70799 / NBRC 1267 / NRRL Y-1140 / WM37</strain>
    </source>
</reference>
<sequence length="587" mass="66189">MNDSVLVAPSLSTAQTEDTFEFQSYGETEHSRSYLGSDVTKDNLVELVSAYYSVPELIQYFEEHPQYKKITLQFPDELVLDSSIVVQLMQQELVKAEDETSQSFNTIDTDEVLHNEKSCGNCSGCDCSSKIDKTETKRKVWILADTSYSSCCVDEVASEHVKGDIVVHFGDACMNAVQKLPVVYSLGRPVLDLDLVVSQFKLKYAAKDQKICLMADAPHSMHMKSIYDILHDKEGYKNVVYSDINQDMLQSDTHIVGYNNAVEHDERLRKCVTCGNRNIYAEVDVSELNEYDLFHVTIPKDPHLLYLTTKFQSVTLYDPSSGMLNEGPFPSMMKRYKFMHMARTAGTIGILVNTLSLRNTKETMNKLTKLLKENGKKHYLFVVGKPNVAKLANFEPIDIWCILGCGQGGIVLDQYNEFYKPIITPYELLMALSDEVTWTGQWITDFKSIINQIENEVNDSDDMEQDILSSGTECRSDEDEAPEFNAVTGKYVSTSRPLRQIARLEIETPVEEVRASDSTELVKQFSQTVAIRNTVSTSAAFLQTRHWTGLGSDYKDDEDGEEDGATVEEGTAGVARSYQFDELNKKT</sequence>
<comment type="function">
    <text evidence="1">Required for the first step of diphthamide biosynthesis, a post-translational modification of histidine which occurs in elongation factor 2. DPH1 and DPH2 transfer a 3-amino-3-carboxypropyl (ACP) group from S-adenosyl-L-methionine (SAM) to a histidine residue, the reaction is assisted by a reduction system comprising DPH3 and a NADH-dependent reductase, predominantly CBR1 (By similarity). Facilitates the reduction of the catalytic iron-sulfur cluster found in the DPH1 subunit (By similarity).</text>
</comment>
<comment type="cofactor">
    <cofactor evidence="1">
        <name>[4Fe-4S] cluster</name>
        <dbReference type="ChEBI" id="CHEBI:49883"/>
    </cofactor>
    <text evidence="1">Binds 1 [4Fe-4S] cluster per subunit. The cluster facilitates the reduction of the catalytic iron-sulfur cluster in the DPH1 subunit.</text>
</comment>
<comment type="pathway">
    <text evidence="1">Protein modification; peptidyl-diphthamide biosynthesis.</text>
</comment>
<comment type="subunit">
    <text evidence="1">Component of the 2-(3-amino-3-carboxypropyl)histidine synthase complex composed of DPH1, DPH2, DPH3 and a NADH-dependent reductase, predominantly CBR1.</text>
</comment>
<comment type="subcellular location">
    <subcellularLocation>
        <location evidence="1">Cytoplasm</location>
    </subcellularLocation>
</comment>
<comment type="similarity">
    <text evidence="3">Belongs to the DPH1/DPH2 family. DPH2 subfamily.</text>
</comment>
<evidence type="ECO:0000250" key="1">
    <source>
        <dbReference type="UniProtKB" id="P32461"/>
    </source>
</evidence>
<evidence type="ECO:0000256" key="2">
    <source>
        <dbReference type="SAM" id="MobiDB-lite"/>
    </source>
</evidence>
<evidence type="ECO:0000305" key="3"/>
<gene>
    <name type="primary">DPH2</name>
    <name type="ordered locus">KLLA0D02948g</name>
</gene>
<protein>
    <recommendedName>
        <fullName evidence="3">2-(3-amino-3-carboxypropyl)histidine synthase subunit 2</fullName>
    </recommendedName>
    <alternativeName>
        <fullName>Diphthamide biosynthesis protein 2</fullName>
    </alternativeName>
    <alternativeName>
        <fullName evidence="3">Diphtheria toxin resistance protein 2</fullName>
    </alternativeName>
    <alternativeName>
        <fullName evidence="3">S-adenosyl-L-methionine:L-histidine 3-amino-3-carboxypropyltransferase 2</fullName>
    </alternativeName>
</protein>
<name>DPH2_KLULA</name>
<dbReference type="EMBL" id="CR382124">
    <property type="protein sequence ID" value="CAH00295.1"/>
    <property type="molecule type" value="Genomic_DNA"/>
</dbReference>
<dbReference type="RefSeq" id="XP_453199.1">
    <property type="nucleotide sequence ID" value="XM_453199.1"/>
</dbReference>
<dbReference type="SMR" id="Q6CS90"/>
<dbReference type="FunCoup" id="Q6CS90">
    <property type="interactions" value="997"/>
</dbReference>
<dbReference type="STRING" id="284590.Q6CS90"/>
<dbReference type="PaxDb" id="284590-Q6CS90"/>
<dbReference type="KEGG" id="kla:KLLA0_D02948g"/>
<dbReference type="eggNOG" id="KOG2648">
    <property type="taxonomic scope" value="Eukaryota"/>
</dbReference>
<dbReference type="HOGENOM" id="CLU_015210_1_1_1"/>
<dbReference type="InParanoid" id="Q6CS90"/>
<dbReference type="OMA" id="TSNSRPM"/>
<dbReference type="UniPathway" id="UPA00559"/>
<dbReference type="Proteomes" id="UP000000598">
    <property type="component" value="Chromosome D"/>
</dbReference>
<dbReference type="GO" id="GO:0120513">
    <property type="term" value="C:2-(3-amino-3-carboxypropyl)histidine synthase complex"/>
    <property type="evidence" value="ECO:0000250"/>
    <property type="project" value="UniProtKB"/>
</dbReference>
<dbReference type="GO" id="GO:0005737">
    <property type="term" value="C:cytoplasm"/>
    <property type="evidence" value="ECO:0007669"/>
    <property type="project" value="UniProtKB-SubCell"/>
</dbReference>
<dbReference type="GO" id="GO:0090560">
    <property type="term" value="F:2-(3-amino-3-carboxypropyl)histidine synthase activity"/>
    <property type="evidence" value="ECO:0007669"/>
    <property type="project" value="UniProtKB-EC"/>
</dbReference>
<dbReference type="GO" id="GO:0051539">
    <property type="term" value="F:4 iron, 4 sulfur cluster binding"/>
    <property type="evidence" value="ECO:0000250"/>
    <property type="project" value="UniProtKB"/>
</dbReference>
<dbReference type="GO" id="GO:0046872">
    <property type="term" value="F:metal ion binding"/>
    <property type="evidence" value="ECO:0007669"/>
    <property type="project" value="UniProtKB-KW"/>
</dbReference>
<dbReference type="GO" id="GO:0017183">
    <property type="term" value="P:protein histidyl modification to diphthamide"/>
    <property type="evidence" value="ECO:0000250"/>
    <property type="project" value="UniProtKB"/>
</dbReference>
<dbReference type="FunFam" id="3.40.50.11860:FF:000001">
    <property type="entry name" value="2-(3-amino-3-carboxypropyl)histidine synthase subunit 2"/>
    <property type="match status" value="1"/>
</dbReference>
<dbReference type="Gene3D" id="3.40.50.11840">
    <property type="entry name" value="Diphthamide synthesis DPH1/DPH2 domain 1"/>
    <property type="match status" value="1"/>
</dbReference>
<dbReference type="Gene3D" id="3.40.50.11860">
    <property type="entry name" value="Diphthamide synthesis DPH1/DPH2 domain 3"/>
    <property type="match status" value="1"/>
</dbReference>
<dbReference type="InterPro" id="IPR010014">
    <property type="entry name" value="DHP2"/>
</dbReference>
<dbReference type="InterPro" id="IPR016435">
    <property type="entry name" value="DPH1/DPH2"/>
</dbReference>
<dbReference type="InterPro" id="IPR042263">
    <property type="entry name" value="DPH1/DPH2_1"/>
</dbReference>
<dbReference type="InterPro" id="IPR042265">
    <property type="entry name" value="DPH1/DPH2_3"/>
</dbReference>
<dbReference type="NCBIfam" id="TIGR00322">
    <property type="entry name" value="diphth2_R"/>
    <property type="match status" value="1"/>
</dbReference>
<dbReference type="NCBIfam" id="TIGR00272">
    <property type="entry name" value="DPH2"/>
    <property type="match status" value="1"/>
</dbReference>
<dbReference type="PANTHER" id="PTHR10762:SF2">
    <property type="entry name" value="2-(3-AMINO-3-CARBOXYPROPYL)HISTIDINE SYNTHASE SUBUNIT 2"/>
    <property type="match status" value="1"/>
</dbReference>
<dbReference type="PANTHER" id="PTHR10762">
    <property type="entry name" value="DIPHTHAMIDE BIOSYNTHESIS PROTEIN"/>
    <property type="match status" value="1"/>
</dbReference>
<dbReference type="Pfam" id="PF01866">
    <property type="entry name" value="Diphthamide_syn"/>
    <property type="match status" value="1"/>
</dbReference>
<dbReference type="SFLD" id="SFLDG01121">
    <property type="entry name" value="Diphthamide_biosynthesis"/>
    <property type="match status" value="1"/>
</dbReference>
<dbReference type="SFLD" id="SFLDF00408">
    <property type="entry name" value="Diphthamide_biosynthesis_famil"/>
    <property type="match status" value="1"/>
</dbReference>
<dbReference type="SFLD" id="SFLDS00032">
    <property type="entry name" value="Radical_SAM_3-amino-3-carboxyp"/>
    <property type="match status" value="1"/>
</dbReference>